<comment type="function">
    <text evidence="1">Induces the formation of large intracellular inclusion body, organized in amorphous and crystalline arrays. Presumably the main cause of the stripe disease observed in host (By similarity).</text>
</comment>
<comment type="subcellular location">
    <subcellularLocation>
        <location evidence="1">Host cytoplasm</location>
    </subcellularLocation>
</comment>
<comment type="similarity">
    <text evidence="2">Belongs to the tenuiviruses NCP family.</text>
</comment>
<feature type="chain" id="PRO_0000222525" description="Major non-capsid protein">
    <location>
        <begin position="1"/>
        <end position="178"/>
    </location>
</feature>
<protein>
    <recommendedName>
        <fullName>Major non-capsid protein</fullName>
        <shortName>NCP</shortName>
    </recommendedName>
    <alternativeName>
        <fullName>20.5 kDa protein</fullName>
    </alternativeName>
    <alternativeName>
        <fullName>Protein p4</fullName>
    </alternativeName>
    <alternativeName>
        <fullName>Stripe disease-specific protein</fullName>
        <shortName>Protein S</shortName>
    </alternativeName>
</protein>
<accession>Q01209</accession>
<reference key="1">
    <citation type="journal article" date="1990" name="J. Gen. Virol.">
        <title>Ambisense segment 4 of rice stripe virus: possible evolutionary relationship with phleboviruses and uukuviruses (Bunyaviridae).</title>
        <authorList>
            <person name="Kakutani T."/>
            <person name="Hayano Y."/>
            <person name="Hayashi T."/>
            <person name="Minobe Y."/>
        </authorList>
    </citation>
    <scope>NUCLEOTIDE SEQUENCE [GENOMIC RNA]</scope>
    <scope>PARTIAL PROTEIN SEQUENCE</scope>
</reference>
<keyword id="KW-0903">Direct protein sequencing</keyword>
<keyword id="KW-1035">Host cytoplasm</keyword>
<gene>
    <name type="ORF">p4</name>
</gene>
<organismHost>
    <name type="scientific">Avena sativa</name>
    <name type="common">Oat</name>
    <dbReference type="NCBI Taxonomy" id="4498"/>
</organismHost>
<organismHost>
    <name type="scientific">Digitaria</name>
    <dbReference type="NCBI Taxonomy" id="66017"/>
</organismHost>
<organismHost>
    <name type="scientific">Eragrostis</name>
    <dbReference type="NCBI Taxonomy" id="38413"/>
</organismHost>
<organismHost>
    <name type="scientific">Hordeum vulgare</name>
    <name type="common">Barley</name>
    <dbReference type="NCBI Taxonomy" id="4513"/>
</organismHost>
<organismHost>
    <name type="scientific">Oryza sativa</name>
    <name type="common">Rice</name>
    <dbReference type="NCBI Taxonomy" id="4530"/>
</organismHost>
<organismHost>
    <name type="scientific">Setaria italica</name>
    <name type="common">Foxtail millet</name>
    <name type="synonym">Panicum italicum</name>
    <dbReference type="NCBI Taxonomy" id="4555"/>
</organismHost>
<organismHost>
    <name type="scientific">Setaria viridis</name>
    <name type="common">Green bristlegrass</name>
    <name type="synonym">Setaria italica subsp. viridis</name>
    <dbReference type="NCBI Taxonomy" id="4556"/>
</organismHost>
<organismHost>
    <name type="scientific">Triticum aestivum</name>
    <name type="common">Wheat</name>
    <dbReference type="NCBI Taxonomy" id="4565"/>
</organismHost>
<organismHost>
    <name type="scientific">Zea mays</name>
    <name type="common">Maize</name>
    <dbReference type="NCBI Taxonomy" id="4577"/>
</organismHost>
<sequence>MQDVQRTVEVSVGPIVGLDYTLLYDTLPETVSDNITLPDLKDPERVTEDTKKLILKGCVYIAYHHPLETDTLFIKVHKHITEFCHSFLSHLLGGEDDDNALIDIGLFFNMLQPSLGGWITKNFLRHPNRMSKDQIKLLLDQIIKMAKAESSDTEEYEKVWKKMPTYFESIIQPLLHKT</sequence>
<name>NCP_RSVM</name>
<evidence type="ECO:0000250" key="1"/>
<evidence type="ECO:0000305" key="2"/>
<organism>
    <name type="scientific">Rice stripe virus (isolate M)</name>
    <name type="common">RSV</name>
    <dbReference type="NCBI Taxonomy" id="36393"/>
    <lineage>
        <taxon>Viruses</taxon>
        <taxon>Riboviria</taxon>
        <taxon>Orthornavirae</taxon>
        <taxon>Negarnaviricota</taxon>
        <taxon>Polyploviricotina</taxon>
        <taxon>Ellioviricetes</taxon>
        <taxon>Bunyavirales</taxon>
        <taxon>Phenuiviridae</taxon>
        <taxon>Tenuivirus</taxon>
        <taxon>Tenuivirus oryzaclavatae</taxon>
    </lineage>
</organism>
<dbReference type="EMBL" id="D01039">
    <property type="protein sequence ID" value="BAA00846.1"/>
    <property type="molecule type" value="Genomic_RNA"/>
</dbReference>
<dbReference type="SMR" id="Q01209"/>
<dbReference type="GO" id="GO:0030430">
    <property type="term" value="C:host cell cytoplasm"/>
    <property type="evidence" value="ECO:0007669"/>
    <property type="project" value="UniProtKB-SubCell"/>
</dbReference>
<dbReference type="InterPro" id="IPR006960">
    <property type="entry name" value="Major_non-capsid_tenuivirus"/>
</dbReference>
<dbReference type="Pfam" id="PF04876">
    <property type="entry name" value="Tenui_NCP"/>
    <property type="match status" value="1"/>
</dbReference>
<proteinExistence type="evidence at protein level"/>